<proteinExistence type="inferred from homology"/>
<gene>
    <name evidence="1" type="primary">rplQ</name>
    <name type="synonym">twt527</name>
    <name type="ordered locus">TWT_527</name>
</gene>
<comment type="subunit">
    <text evidence="1">Part of the 50S ribosomal subunit. Contacts protein L32.</text>
</comment>
<comment type="similarity">
    <text evidence="1">Belongs to the bacterial ribosomal protein bL17 family.</text>
</comment>
<accession>Q83G10</accession>
<reference key="1">
    <citation type="journal article" date="2003" name="Genome Res.">
        <title>Tropheryma whipplei twist: a human pathogenic Actinobacteria with a reduced genome.</title>
        <authorList>
            <person name="Raoult D."/>
            <person name="Ogata H."/>
            <person name="Audic S."/>
            <person name="Robert C."/>
            <person name="Suhre K."/>
            <person name="Drancourt M."/>
            <person name="Claverie J.-M."/>
        </authorList>
    </citation>
    <scope>NUCLEOTIDE SEQUENCE [LARGE SCALE GENOMIC DNA]</scope>
    <source>
        <strain>Twist</strain>
    </source>
</reference>
<dbReference type="EMBL" id="AE014184">
    <property type="protein sequence ID" value="AAO44624.1"/>
    <property type="molecule type" value="Genomic_DNA"/>
</dbReference>
<dbReference type="RefSeq" id="WP_011102634.1">
    <property type="nucleotide sequence ID" value="NC_004572.3"/>
</dbReference>
<dbReference type="SMR" id="Q83G10"/>
<dbReference type="STRING" id="203267.TWT_527"/>
<dbReference type="KEGG" id="twh:TWT_527"/>
<dbReference type="eggNOG" id="COG0203">
    <property type="taxonomic scope" value="Bacteria"/>
</dbReference>
<dbReference type="HOGENOM" id="CLU_074407_0_0_11"/>
<dbReference type="OrthoDB" id="9809073at2"/>
<dbReference type="Proteomes" id="UP000002200">
    <property type="component" value="Chromosome"/>
</dbReference>
<dbReference type="GO" id="GO:0022625">
    <property type="term" value="C:cytosolic large ribosomal subunit"/>
    <property type="evidence" value="ECO:0007669"/>
    <property type="project" value="TreeGrafter"/>
</dbReference>
<dbReference type="GO" id="GO:0003735">
    <property type="term" value="F:structural constituent of ribosome"/>
    <property type="evidence" value="ECO:0007669"/>
    <property type="project" value="InterPro"/>
</dbReference>
<dbReference type="GO" id="GO:0006412">
    <property type="term" value="P:translation"/>
    <property type="evidence" value="ECO:0007669"/>
    <property type="project" value="UniProtKB-UniRule"/>
</dbReference>
<dbReference type="Gene3D" id="3.90.1030.10">
    <property type="entry name" value="Ribosomal protein L17"/>
    <property type="match status" value="1"/>
</dbReference>
<dbReference type="HAMAP" id="MF_01368">
    <property type="entry name" value="Ribosomal_bL17"/>
    <property type="match status" value="1"/>
</dbReference>
<dbReference type="InterPro" id="IPR000456">
    <property type="entry name" value="Ribosomal_bL17"/>
</dbReference>
<dbReference type="InterPro" id="IPR047859">
    <property type="entry name" value="Ribosomal_bL17_CS"/>
</dbReference>
<dbReference type="InterPro" id="IPR036373">
    <property type="entry name" value="Ribosomal_bL17_sf"/>
</dbReference>
<dbReference type="NCBIfam" id="TIGR00059">
    <property type="entry name" value="L17"/>
    <property type="match status" value="1"/>
</dbReference>
<dbReference type="PANTHER" id="PTHR14413:SF16">
    <property type="entry name" value="LARGE RIBOSOMAL SUBUNIT PROTEIN BL17M"/>
    <property type="match status" value="1"/>
</dbReference>
<dbReference type="PANTHER" id="PTHR14413">
    <property type="entry name" value="RIBOSOMAL PROTEIN L17"/>
    <property type="match status" value="1"/>
</dbReference>
<dbReference type="Pfam" id="PF01196">
    <property type="entry name" value="Ribosomal_L17"/>
    <property type="match status" value="1"/>
</dbReference>
<dbReference type="SUPFAM" id="SSF64263">
    <property type="entry name" value="Prokaryotic ribosomal protein L17"/>
    <property type="match status" value="1"/>
</dbReference>
<dbReference type="PROSITE" id="PS01167">
    <property type="entry name" value="RIBOSOMAL_L17"/>
    <property type="match status" value="1"/>
</dbReference>
<organism>
    <name type="scientific">Tropheryma whipplei (strain Twist)</name>
    <name type="common">Whipple's bacillus</name>
    <dbReference type="NCBI Taxonomy" id="203267"/>
    <lineage>
        <taxon>Bacteria</taxon>
        <taxon>Bacillati</taxon>
        <taxon>Actinomycetota</taxon>
        <taxon>Actinomycetes</taxon>
        <taxon>Micrococcales</taxon>
        <taxon>Tropherymataceae</taxon>
        <taxon>Tropheryma</taxon>
    </lineage>
</organism>
<sequence>MPKPSRGPRMCSGPDHERLVLANMSASLFLNKKLRTTEARAKRLRPFAEKLVTLSKRGGLHSRRRALSILRNKAALHELFTNIAPLVEDRNGGYTRITKVGFRSGDGAPMALIELILEPVSARTRGTDTLPDTVTDTGPDSAPDPVPGSEPGSAAGDLPDADTAPADPGESSSNQRVIR</sequence>
<evidence type="ECO:0000255" key="1">
    <source>
        <dbReference type="HAMAP-Rule" id="MF_01368"/>
    </source>
</evidence>
<evidence type="ECO:0000256" key="2">
    <source>
        <dbReference type="SAM" id="MobiDB-lite"/>
    </source>
</evidence>
<evidence type="ECO:0000305" key="3"/>
<protein>
    <recommendedName>
        <fullName evidence="1">Large ribosomal subunit protein bL17</fullName>
    </recommendedName>
    <alternativeName>
        <fullName evidence="3">50S ribosomal protein L17</fullName>
    </alternativeName>
</protein>
<name>RL17_TROWT</name>
<feature type="chain" id="PRO_1000055987" description="Large ribosomal subunit protein bL17">
    <location>
        <begin position="1"/>
        <end position="179"/>
    </location>
</feature>
<feature type="region of interest" description="Disordered" evidence="2">
    <location>
        <begin position="123"/>
        <end position="179"/>
    </location>
</feature>
<feature type="compositionally biased region" description="Low complexity" evidence="2">
    <location>
        <begin position="154"/>
        <end position="168"/>
    </location>
</feature>
<feature type="compositionally biased region" description="Polar residues" evidence="2">
    <location>
        <begin position="170"/>
        <end position="179"/>
    </location>
</feature>
<keyword id="KW-1185">Reference proteome</keyword>
<keyword id="KW-0687">Ribonucleoprotein</keyword>
<keyword id="KW-0689">Ribosomal protein</keyword>